<name>RS3_ACIBC</name>
<evidence type="ECO:0000255" key="1">
    <source>
        <dbReference type="HAMAP-Rule" id="MF_01309"/>
    </source>
</evidence>
<evidence type="ECO:0000256" key="2">
    <source>
        <dbReference type="SAM" id="MobiDB-lite"/>
    </source>
</evidence>
<evidence type="ECO:0000305" key="3"/>
<feature type="chain" id="PRO_1000140914" description="Small ribosomal subunit protein uS3">
    <location>
        <begin position="1"/>
        <end position="250"/>
    </location>
</feature>
<feature type="domain" description="KH type-2" evidence="1">
    <location>
        <begin position="39"/>
        <end position="107"/>
    </location>
</feature>
<feature type="region of interest" description="Disordered" evidence="2">
    <location>
        <begin position="215"/>
        <end position="250"/>
    </location>
</feature>
<feature type="compositionally biased region" description="Basic and acidic residues" evidence="2">
    <location>
        <begin position="220"/>
        <end position="250"/>
    </location>
</feature>
<gene>
    <name evidence="1" type="primary">rpsC</name>
    <name type="ordered locus">ACICU_03274</name>
</gene>
<reference key="1">
    <citation type="journal article" date="2008" name="Antimicrob. Agents Chemother.">
        <title>Whole-genome pyrosequencing of an epidemic multidrug-resistant Acinetobacter baumannii strain belonging to the European clone II group.</title>
        <authorList>
            <person name="Iacono M."/>
            <person name="Villa L."/>
            <person name="Fortini D."/>
            <person name="Bordoni R."/>
            <person name="Imperi F."/>
            <person name="Bonnal R.J."/>
            <person name="Sicheritz-Ponten T."/>
            <person name="De Bellis G."/>
            <person name="Visca P."/>
            <person name="Cassone A."/>
            <person name="Carattoli A."/>
        </authorList>
    </citation>
    <scope>NUCLEOTIDE SEQUENCE [LARGE SCALE GENOMIC DNA]</scope>
    <source>
        <strain>ACICU</strain>
    </source>
</reference>
<accession>B2HZA2</accession>
<proteinExistence type="inferred from homology"/>
<protein>
    <recommendedName>
        <fullName evidence="1">Small ribosomal subunit protein uS3</fullName>
    </recommendedName>
    <alternativeName>
        <fullName evidence="3">30S ribosomal protein S3</fullName>
    </alternativeName>
</protein>
<sequence>MGQKVHPIGIRLGVVKRHNANWYANPKQYAEYLLKDLQVREFLTKKLKNAMVSNILIERPSGAAKVTISTARPGIVIGKKGEDIEKLQRELTNIMGVPAQVSINEIDRPDLDARLVAEAIASQLEKRVMFRRAMKRAVQNTMRAGAKGIKVEVSGRLGGAEIARTEWYREGRVPLHTLRADIDYATMRAETTYGTIGVKVWIFRGEILGGMKQVMNPAPAEERPAKRGRGRGEGQERRGRRGDRAADKGE</sequence>
<dbReference type="EMBL" id="CP000863">
    <property type="protein sequence ID" value="ACC58584.1"/>
    <property type="molecule type" value="Genomic_DNA"/>
</dbReference>
<dbReference type="SMR" id="B2HZA2"/>
<dbReference type="KEGG" id="abc:ACICU_03274"/>
<dbReference type="HOGENOM" id="CLU_058591_0_2_6"/>
<dbReference type="Proteomes" id="UP000008839">
    <property type="component" value="Chromosome"/>
</dbReference>
<dbReference type="GO" id="GO:0022627">
    <property type="term" value="C:cytosolic small ribosomal subunit"/>
    <property type="evidence" value="ECO:0007669"/>
    <property type="project" value="TreeGrafter"/>
</dbReference>
<dbReference type="GO" id="GO:0003729">
    <property type="term" value="F:mRNA binding"/>
    <property type="evidence" value="ECO:0007669"/>
    <property type="project" value="UniProtKB-UniRule"/>
</dbReference>
<dbReference type="GO" id="GO:0019843">
    <property type="term" value="F:rRNA binding"/>
    <property type="evidence" value="ECO:0007669"/>
    <property type="project" value="UniProtKB-UniRule"/>
</dbReference>
<dbReference type="GO" id="GO:0003735">
    <property type="term" value="F:structural constituent of ribosome"/>
    <property type="evidence" value="ECO:0007669"/>
    <property type="project" value="InterPro"/>
</dbReference>
<dbReference type="GO" id="GO:0006412">
    <property type="term" value="P:translation"/>
    <property type="evidence" value="ECO:0007669"/>
    <property type="project" value="UniProtKB-UniRule"/>
</dbReference>
<dbReference type="CDD" id="cd02412">
    <property type="entry name" value="KH-II_30S_S3"/>
    <property type="match status" value="1"/>
</dbReference>
<dbReference type="FunFam" id="3.30.1140.32:FF:000001">
    <property type="entry name" value="30S ribosomal protein S3"/>
    <property type="match status" value="1"/>
</dbReference>
<dbReference type="FunFam" id="3.30.300.20:FF:000001">
    <property type="entry name" value="30S ribosomal protein S3"/>
    <property type="match status" value="1"/>
</dbReference>
<dbReference type="Gene3D" id="3.30.300.20">
    <property type="match status" value="1"/>
</dbReference>
<dbReference type="Gene3D" id="3.30.1140.32">
    <property type="entry name" value="Ribosomal protein S3, C-terminal domain"/>
    <property type="match status" value="1"/>
</dbReference>
<dbReference type="HAMAP" id="MF_01309_B">
    <property type="entry name" value="Ribosomal_uS3_B"/>
    <property type="match status" value="1"/>
</dbReference>
<dbReference type="InterPro" id="IPR004087">
    <property type="entry name" value="KH_dom"/>
</dbReference>
<dbReference type="InterPro" id="IPR015946">
    <property type="entry name" value="KH_dom-like_a/b"/>
</dbReference>
<dbReference type="InterPro" id="IPR004044">
    <property type="entry name" value="KH_dom_type_2"/>
</dbReference>
<dbReference type="InterPro" id="IPR009019">
    <property type="entry name" value="KH_sf_prok-type"/>
</dbReference>
<dbReference type="InterPro" id="IPR036419">
    <property type="entry name" value="Ribosomal_S3_C_sf"/>
</dbReference>
<dbReference type="InterPro" id="IPR005704">
    <property type="entry name" value="Ribosomal_uS3_bac-typ"/>
</dbReference>
<dbReference type="InterPro" id="IPR001351">
    <property type="entry name" value="Ribosomal_uS3_C"/>
</dbReference>
<dbReference type="InterPro" id="IPR018280">
    <property type="entry name" value="Ribosomal_uS3_CS"/>
</dbReference>
<dbReference type="NCBIfam" id="TIGR01009">
    <property type="entry name" value="rpsC_bact"/>
    <property type="match status" value="1"/>
</dbReference>
<dbReference type="PANTHER" id="PTHR11760">
    <property type="entry name" value="30S/40S RIBOSOMAL PROTEIN S3"/>
    <property type="match status" value="1"/>
</dbReference>
<dbReference type="PANTHER" id="PTHR11760:SF19">
    <property type="entry name" value="SMALL RIBOSOMAL SUBUNIT PROTEIN US3C"/>
    <property type="match status" value="1"/>
</dbReference>
<dbReference type="Pfam" id="PF07650">
    <property type="entry name" value="KH_2"/>
    <property type="match status" value="1"/>
</dbReference>
<dbReference type="Pfam" id="PF00189">
    <property type="entry name" value="Ribosomal_S3_C"/>
    <property type="match status" value="1"/>
</dbReference>
<dbReference type="SMART" id="SM00322">
    <property type="entry name" value="KH"/>
    <property type="match status" value="1"/>
</dbReference>
<dbReference type="SUPFAM" id="SSF54814">
    <property type="entry name" value="Prokaryotic type KH domain (KH-domain type II)"/>
    <property type="match status" value="1"/>
</dbReference>
<dbReference type="SUPFAM" id="SSF54821">
    <property type="entry name" value="Ribosomal protein S3 C-terminal domain"/>
    <property type="match status" value="1"/>
</dbReference>
<dbReference type="PROSITE" id="PS50823">
    <property type="entry name" value="KH_TYPE_2"/>
    <property type="match status" value="1"/>
</dbReference>
<dbReference type="PROSITE" id="PS00548">
    <property type="entry name" value="RIBOSOMAL_S3"/>
    <property type="match status" value="1"/>
</dbReference>
<comment type="function">
    <text evidence="1">Binds the lower part of the 30S subunit head. Binds mRNA in the 70S ribosome, positioning it for translation.</text>
</comment>
<comment type="subunit">
    <text evidence="1">Part of the 30S ribosomal subunit. Forms a tight complex with proteins S10 and S14.</text>
</comment>
<comment type="similarity">
    <text evidence="1">Belongs to the universal ribosomal protein uS3 family.</text>
</comment>
<keyword id="KW-0687">Ribonucleoprotein</keyword>
<keyword id="KW-0689">Ribosomal protein</keyword>
<keyword id="KW-0694">RNA-binding</keyword>
<keyword id="KW-0699">rRNA-binding</keyword>
<organism>
    <name type="scientific">Acinetobacter baumannii (strain ACICU)</name>
    <dbReference type="NCBI Taxonomy" id="405416"/>
    <lineage>
        <taxon>Bacteria</taxon>
        <taxon>Pseudomonadati</taxon>
        <taxon>Pseudomonadota</taxon>
        <taxon>Gammaproteobacteria</taxon>
        <taxon>Moraxellales</taxon>
        <taxon>Moraxellaceae</taxon>
        <taxon>Acinetobacter</taxon>
        <taxon>Acinetobacter calcoaceticus/baumannii complex</taxon>
    </lineage>
</organism>